<comment type="function">
    <text evidence="1">Globally modulates RNA abundance by binding to RNase E (Rne) and regulating its endonucleolytic activity. Can modulate Rne action in a substrate-dependent manner by altering the composition of the degradosome. Modulates RNA-binding and helicase activities of the degradosome.</text>
</comment>
<comment type="subunit">
    <text evidence="1">Homotrimer. Binds to both RNA-binding sites in the C-terminal region of Rne and to RhlB.</text>
</comment>
<comment type="subcellular location">
    <subcellularLocation>
        <location evidence="1">Cytoplasm</location>
    </subcellularLocation>
</comment>
<comment type="similarity">
    <text evidence="1">Belongs to the RraA family.</text>
</comment>
<gene>
    <name evidence="1" type="primary">rraA</name>
    <name type="ordered locus">CGSHiEE_00450</name>
</gene>
<name>RRAA_HAEIE</name>
<evidence type="ECO:0000255" key="1">
    <source>
        <dbReference type="HAMAP-Rule" id="MF_00471"/>
    </source>
</evidence>
<feature type="chain" id="PRO_1000013841" description="Regulator of ribonuclease activity A">
    <location>
        <begin position="1"/>
        <end position="162"/>
    </location>
</feature>
<protein>
    <recommendedName>
        <fullName evidence="1">Regulator of ribonuclease activity A</fullName>
    </recommendedName>
</protein>
<reference key="1">
    <citation type="journal article" date="2007" name="Genome Biol.">
        <title>Characterization and modeling of the Haemophilus influenzae core and supragenomes based on the complete genomic sequences of Rd and 12 clinical nontypeable strains.</title>
        <authorList>
            <person name="Hogg J.S."/>
            <person name="Hu F.Z."/>
            <person name="Janto B."/>
            <person name="Boissy R."/>
            <person name="Hayes J."/>
            <person name="Keefe R."/>
            <person name="Post J.C."/>
            <person name="Ehrlich G.D."/>
        </authorList>
    </citation>
    <scope>NUCLEOTIDE SEQUENCE [LARGE SCALE GENOMIC DNA]</scope>
    <source>
        <strain>PittEE</strain>
    </source>
</reference>
<dbReference type="EMBL" id="CP000671">
    <property type="protein sequence ID" value="ABQ97584.1"/>
    <property type="molecule type" value="Genomic_DNA"/>
</dbReference>
<dbReference type="SMR" id="A5U9Y3"/>
<dbReference type="KEGG" id="hip:CGSHiEE_00450"/>
<dbReference type="HOGENOM" id="CLU_072626_4_0_6"/>
<dbReference type="GO" id="GO:0005737">
    <property type="term" value="C:cytoplasm"/>
    <property type="evidence" value="ECO:0007669"/>
    <property type="project" value="UniProtKB-SubCell"/>
</dbReference>
<dbReference type="GO" id="GO:0060698">
    <property type="term" value="F:endoribonuclease inhibitor activity"/>
    <property type="evidence" value="ECO:0007669"/>
    <property type="project" value="UniProtKB-UniRule"/>
</dbReference>
<dbReference type="GO" id="GO:0019899">
    <property type="term" value="F:enzyme binding"/>
    <property type="evidence" value="ECO:0007669"/>
    <property type="project" value="UniProtKB-UniRule"/>
</dbReference>
<dbReference type="GO" id="GO:0051252">
    <property type="term" value="P:regulation of RNA metabolic process"/>
    <property type="evidence" value="ECO:0007669"/>
    <property type="project" value="InterPro"/>
</dbReference>
<dbReference type="CDD" id="cd16841">
    <property type="entry name" value="RraA_family"/>
    <property type="match status" value="1"/>
</dbReference>
<dbReference type="Gene3D" id="3.50.30.40">
    <property type="entry name" value="Ribonuclease E inhibitor RraA/RraA-like"/>
    <property type="match status" value="1"/>
</dbReference>
<dbReference type="HAMAP" id="MF_00471">
    <property type="entry name" value="RraA"/>
    <property type="match status" value="1"/>
</dbReference>
<dbReference type="InterPro" id="IPR010203">
    <property type="entry name" value="RraA"/>
</dbReference>
<dbReference type="InterPro" id="IPR005493">
    <property type="entry name" value="RraA/RraA-like"/>
</dbReference>
<dbReference type="InterPro" id="IPR036704">
    <property type="entry name" value="RraA/RraA-like_sf"/>
</dbReference>
<dbReference type="InterPro" id="IPR014339">
    <property type="entry name" value="RraA_gpbac"/>
</dbReference>
<dbReference type="NCBIfam" id="TIGR01935">
    <property type="entry name" value="NOT-MenG"/>
    <property type="match status" value="1"/>
</dbReference>
<dbReference type="NCBIfam" id="NF006875">
    <property type="entry name" value="PRK09372.1"/>
    <property type="match status" value="1"/>
</dbReference>
<dbReference type="NCBIfam" id="TIGR02998">
    <property type="entry name" value="RraA_entero"/>
    <property type="match status" value="1"/>
</dbReference>
<dbReference type="PANTHER" id="PTHR33254">
    <property type="entry name" value="4-HYDROXY-4-METHYL-2-OXOGLUTARATE ALDOLASE 3-RELATED"/>
    <property type="match status" value="1"/>
</dbReference>
<dbReference type="PANTHER" id="PTHR33254:SF29">
    <property type="entry name" value="REGULATOR OF RIBONUCLEASE ACTIVITY A"/>
    <property type="match status" value="1"/>
</dbReference>
<dbReference type="Pfam" id="PF03737">
    <property type="entry name" value="RraA-like"/>
    <property type="match status" value="1"/>
</dbReference>
<dbReference type="SUPFAM" id="SSF89562">
    <property type="entry name" value="RraA-like"/>
    <property type="match status" value="1"/>
</dbReference>
<proteinExistence type="inferred from homology"/>
<sequence>MFIDTSELCDLYAEQVDVVEPIFSSFGGVSNFYGKVTTVKCFESNGLIAEVLEENGEGRVLVIDGGGAVRRGLIDAELAQLAVDNGWEGIIVYGAVRQIQQLENLDIGIHALAPIPVSADESSAGESDIPVNFGGVTFFPEDYIYADLTGIILSQEPLDLED</sequence>
<keyword id="KW-0963">Cytoplasm</keyword>
<organism>
    <name type="scientific">Haemophilus influenzae (strain PittEE)</name>
    <dbReference type="NCBI Taxonomy" id="374930"/>
    <lineage>
        <taxon>Bacteria</taxon>
        <taxon>Pseudomonadati</taxon>
        <taxon>Pseudomonadota</taxon>
        <taxon>Gammaproteobacteria</taxon>
        <taxon>Pasteurellales</taxon>
        <taxon>Pasteurellaceae</taxon>
        <taxon>Haemophilus</taxon>
    </lineage>
</organism>
<accession>A5U9Y3</accession>